<protein>
    <recommendedName>
        <fullName>Serine protease HtrA-like</fullName>
        <ecNumber>3.4.21.-</ecNumber>
    </recommendedName>
</protein>
<feature type="chain" id="PRO_0000252467" description="Serine protease HtrA-like">
    <location>
        <begin position="1"/>
        <end position="769"/>
    </location>
</feature>
<feature type="transmembrane region" description="Helical" evidence="1">
    <location>
        <begin position="410"/>
        <end position="430"/>
    </location>
</feature>
<feature type="domain" description="PDZ">
    <location>
        <begin position="680"/>
        <end position="733"/>
    </location>
</feature>
<feature type="region of interest" description="Disordered" evidence="2">
    <location>
        <begin position="1"/>
        <end position="287"/>
    </location>
</feature>
<feature type="region of interest" description="Disordered" evidence="2">
    <location>
        <begin position="324"/>
        <end position="390"/>
    </location>
</feature>
<feature type="compositionally biased region" description="Basic residues" evidence="2">
    <location>
        <begin position="1"/>
        <end position="20"/>
    </location>
</feature>
<feature type="compositionally biased region" description="Basic and acidic residues" evidence="2">
    <location>
        <begin position="21"/>
        <end position="64"/>
    </location>
</feature>
<feature type="compositionally biased region" description="Basic and acidic residues" evidence="2">
    <location>
        <begin position="71"/>
        <end position="108"/>
    </location>
</feature>
<feature type="compositionally biased region" description="Polar residues" evidence="2">
    <location>
        <begin position="126"/>
        <end position="137"/>
    </location>
</feature>
<feature type="compositionally biased region" description="Basic and acidic residues" evidence="2">
    <location>
        <begin position="138"/>
        <end position="186"/>
    </location>
</feature>
<feature type="compositionally biased region" description="Polar residues" evidence="2">
    <location>
        <begin position="247"/>
        <end position="262"/>
    </location>
</feature>
<feature type="compositionally biased region" description="Basic and acidic residues" evidence="2">
    <location>
        <begin position="264"/>
        <end position="287"/>
    </location>
</feature>
<feature type="compositionally biased region" description="Polar residues" evidence="2">
    <location>
        <begin position="331"/>
        <end position="347"/>
    </location>
</feature>
<feature type="compositionally biased region" description="Basic and acidic residues" evidence="2">
    <location>
        <begin position="348"/>
        <end position="364"/>
    </location>
</feature>
<feature type="compositionally biased region" description="Polar residues" evidence="2">
    <location>
        <begin position="365"/>
        <end position="390"/>
    </location>
</feature>
<feature type="active site" description="Charge relay system" evidence="1">
    <location>
        <position position="504"/>
    </location>
</feature>
<feature type="active site" description="Charge relay system" evidence="1">
    <location>
        <position position="534"/>
    </location>
</feature>
<feature type="active site" description="Charge relay system" evidence="1">
    <location>
        <position position="619"/>
    </location>
</feature>
<reference key="1">
    <citation type="journal article" date="2001" name="Lancet">
        <title>Whole genome sequencing of meticillin-resistant Staphylococcus aureus.</title>
        <authorList>
            <person name="Kuroda M."/>
            <person name="Ohta T."/>
            <person name="Uchiyama I."/>
            <person name="Baba T."/>
            <person name="Yuzawa H."/>
            <person name="Kobayashi I."/>
            <person name="Cui L."/>
            <person name="Oguchi A."/>
            <person name="Aoki K."/>
            <person name="Nagai Y."/>
            <person name="Lian J.-Q."/>
            <person name="Ito T."/>
            <person name="Kanamori M."/>
            <person name="Matsumaru H."/>
            <person name="Maruyama A."/>
            <person name="Murakami H."/>
            <person name="Hosoyama A."/>
            <person name="Mizutani-Ui Y."/>
            <person name="Takahashi N.K."/>
            <person name="Sawano T."/>
            <person name="Inoue R."/>
            <person name="Kaito C."/>
            <person name="Sekimizu K."/>
            <person name="Hirakawa H."/>
            <person name="Kuhara S."/>
            <person name="Goto S."/>
            <person name="Yabuzaki J."/>
            <person name="Kanehisa M."/>
            <person name="Yamashita A."/>
            <person name="Oshima K."/>
            <person name="Furuya K."/>
            <person name="Yoshino C."/>
            <person name="Shiba T."/>
            <person name="Hattori M."/>
            <person name="Ogasawara N."/>
            <person name="Hayashi H."/>
            <person name="Hiramatsu K."/>
        </authorList>
    </citation>
    <scope>NUCLEOTIDE SEQUENCE [LARGE SCALE GENOMIC DNA]</scope>
    <source>
        <strain>N315</strain>
    </source>
</reference>
<reference key="2">
    <citation type="submission" date="2007-10" db="UniProtKB">
        <title>Shotgun proteomic analysis of total and membrane protein extracts of S. aureus strain N315.</title>
        <authorList>
            <person name="Vaezzadeh A.R."/>
            <person name="Deshusses J."/>
            <person name="Lescuyer P."/>
            <person name="Hochstrasser D.F."/>
        </authorList>
    </citation>
    <scope>IDENTIFICATION BY MASS SPECTROMETRY [LARGE SCALE ANALYSIS]</scope>
    <source>
        <strain>N315</strain>
    </source>
</reference>
<sequence length="769" mass="86448">MDIGKKHVIPKSQYRRKRREFFHNEDREENLNQHQDKQNIDNTTSKKADKQIHKDSIDKHERFKNSLSSHLEQRNRDVNENKAEESKSNQDSKSAYNRDHYLTDDVSKKQNSLDSVDQDTEKSKYYEQNSEATLSTKSTDKVESTEMRKLSSDKNKVGHEEQHVLSKPSEHDKETRIDSESSRTDSDSSMQTEKIKKDSSDGNKSSNLKSEVISDKSNTVPKLSESDDEVNNQKPLTLPEEQKLKRQQSQNEQTKTYTYGDSEQNDKSNHENDLSHHTPSISDDKDNVMRENHIVDDNPDNDINTLSLSKIDDDRKLDEKIHVEDKHKQNADSSETVGYQSQSTASHRSTEKRNISINDHDKLNGQKTNTKTSANNNQKKATSKLNKGRATNNNYSDILKKFWMMYWPKLVILMGIIILIVILNAIFNNVNKNDRMNDNNDADAQKYTTTMKNANNTVKSVVTVENETSKDSSLPKDKASQDEVGSGVVYKKSGDTLYIVTNAHVVGDKENQKITFSNNKSVVGKVLGKDKWSDLAVVKATSSDSSVKEIAIGDSNNLVLGEPILVVGNPLGVDFKGTVTEGIISGLNRNVPIDFDKDNKYDMLMKAFQIDASVNPGNSGGAVVNREGKLIGVVAAKISMPNVENMSFAIPVNEVQKIVKDLETKGKIDYPDVGVKMKNIASLNSFERQAVKLPGKVKNGVVVDQVDNNGLADQSGLKKGDVITELDGKLLEDDLRFRQIIFSHKDDLKSITAKIYRDGKEKEINIKLK</sequence>
<gene>
    <name type="ordered locus">SA0879</name>
</gene>
<organism>
    <name type="scientific">Staphylococcus aureus (strain N315)</name>
    <dbReference type="NCBI Taxonomy" id="158879"/>
    <lineage>
        <taxon>Bacteria</taxon>
        <taxon>Bacillati</taxon>
        <taxon>Bacillota</taxon>
        <taxon>Bacilli</taxon>
        <taxon>Bacillales</taxon>
        <taxon>Staphylococcaceae</taxon>
        <taxon>Staphylococcus</taxon>
    </lineage>
</organism>
<proteinExistence type="evidence at protein level"/>
<keyword id="KW-1003">Cell membrane</keyword>
<keyword id="KW-0378">Hydrolase</keyword>
<keyword id="KW-0472">Membrane</keyword>
<keyword id="KW-0645">Protease</keyword>
<keyword id="KW-0720">Serine protease</keyword>
<keyword id="KW-0812">Transmembrane</keyword>
<keyword id="KW-1133">Transmembrane helix</keyword>
<name>HTRAL_STAAN</name>
<dbReference type="EC" id="3.4.21.-"/>
<dbReference type="EMBL" id="BA000018">
    <property type="protein sequence ID" value="BAB42121.1"/>
    <property type="molecule type" value="Genomic_DNA"/>
</dbReference>
<dbReference type="PIR" id="F89870">
    <property type="entry name" value="F89870"/>
</dbReference>
<dbReference type="SMR" id="Q7A6C9"/>
<dbReference type="EnsemblBacteria" id="BAB42121">
    <property type="protein sequence ID" value="BAB42121"/>
    <property type="gene ID" value="BAB42121"/>
</dbReference>
<dbReference type="KEGG" id="sau:SA0879"/>
<dbReference type="HOGENOM" id="CLU_027421_0_0_9"/>
<dbReference type="GO" id="GO:0005886">
    <property type="term" value="C:plasma membrane"/>
    <property type="evidence" value="ECO:0007669"/>
    <property type="project" value="UniProtKB-SubCell"/>
</dbReference>
<dbReference type="GO" id="GO:0004252">
    <property type="term" value="F:serine-type endopeptidase activity"/>
    <property type="evidence" value="ECO:0007669"/>
    <property type="project" value="InterPro"/>
</dbReference>
<dbReference type="GO" id="GO:0006508">
    <property type="term" value="P:proteolysis"/>
    <property type="evidence" value="ECO:0007669"/>
    <property type="project" value="UniProtKB-KW"/>
</dbReference>
<dbReference type="CDD" id="cd06781">
    <property type="entry name" value="cpPDZ_BsHtra-like"/>
    <property type="match status" value="1"/>
</dbReference>
<dbReference type="Gene3D" id="2.30.42.10">
    <property type="match status" value="1"/>
</dbReference>
<dbReference type="Gene3D" id="2.40.10.10">
    <property type="entry name" value="Trypsin-like serine proteases"/>
    <property type="match status" value="2"/>
</dbReference>
<dbReference type="InterPro" id="IPR051201">
    <property type="entry name" value="Chloro_Bact_Ser_Proteases"/>
</dbReference>
<dbReference type="InterPro" id="IPR001478">
    <property type="entry name" value="PDZ"/>
</dbReference>
<dbReference type="InterPro" id="IPR036034">
    <property type="entry name" value="PDZ_sf"/>
</dbReference>
<dbReference type="InterPro" id="IPR009003">
    <property type="entry name" value="Peptidase_S1_PA"/>
</dbReference>
<dbReference type="InterPro" id="IPR043504">
    <property type="entry name" value="Peptidase_S1_PA_chymotrypsin"/>
</dbReference>
<dbReference type="InterPro" id="IPR001940">
    <property type="entry name" value="Peptidase_S1C"/>
</dbReference>
<dbReference type="PANTHER" id="PTHR43343">
    <property type="entry name" value="PEPTIDASE S12"/>
    <property type="match status" value="1"/>
</dbReference>
<dbReference type="PANTHER" id="PTHR43343:SF3">
    <property type="entry name" value="PROTEASE DO-LIKE 8, CHLOROPLASTIC"/>
    <property type="match status" value="1"/>
</dbReference>
<dbReference type="Pfam" id="PF13180">
    <property type="entry name" value="PDZ_2"/>
    <property type="match status" value="1"/>
</dbReference>
<dbReference type="Pfam" id="PF13365">
    <property type="entry name" value="Trypsin_2"/>
    <property type="match status" value="1"/>
</dbReference>
<dbReference type="PRINTS" id="PR00834">
    <property type="entry name" value="PROTEASES2C"/>
</dbReference>
<dbReference type="SMART" id="SM00228">
    <property type="entry name" value="PDZ"/>
    <property type="match status" value="1"/>
</dbReference>
<dbReference type="SUPFAM" id="SSF50156">
    <property type="entry name" value="PDZ domain-like"/>
    <property type="match status" value="1"/>
</dbReference>
<dbReference type="SUPFAM" id="SSF50494">
    <property type="entry name" value="Trypsin-like serine proteases"/>
    <property type="match status" value="1"/>
</dbReference>
<comment type="subcellular location">
    <subcellularLocation>
        <location evidence="3">Cell membrane</location>
        <topology evidence="3">Single-pass membrane protein</topology>
    </subcellularLocation>
</comment>
<comment type="similarity">
    <text evidence="3">Belongs to the peptidase S1C family.</text>
</comment>
<evidence type="ECO:0000255" key="1"/>
<evidence type="ECO:0000256" key="2">
    <source>
        <dbReference type="SAM" id="MobiDB-lite"/>
    </source>
</evidence>
<evidence type="ECO:0000305" key="3"/>
<accession>Q7A6C9</accession>